<keyword id="KW-0472">Membrane</keyword>
<keyword id="KW-0520">NAD</keyword>
<keyword id="KW-0521">NADP</keyword>
<keyword id="KW-0618">Plastoquinone</keyword>
<keyword id="KW-0874">Quinone</keyword>
<keyword id="KW-1185">Reference proteome</keyword>
<keyword id="KW-0793">Thylakoid</keyword>
<keyword id="KW-1278">Translocase</keyword>
<keyword id="KW-0812">Transmembrane</keyword>
<keyword id="KW-1133">Transmembrane helix</keyword>
<name>NU4C_SYNPW</name>
<dbReference type="EC" id="7.1.1.-" evidence="1"/>
<dbReference type="EMBL" id="CT971583">
    <property type="protein sequence ID" value="CAK24706.1"/>
    <property type="molecule type" value="Genomic_DNA"/>
</dbReference>
<dbReference type="SMR" id="A5GP41"/>
<dbReference type="STRING" id="32051.SynWH7803_2280"/>
<dbReference type="KEGG" id="syx:SynWH7803_2280"/>
<dbReference type="eggNOG" id="COG1008">
    <property type="taxonomic scope" value="Bacteria"/>
</dbReference>
<dbReference type="HOGENOM" id="CLU_007100_4_0_3"/>
<dbReference type="OrthoDB" id="9811718at2"/>
<dbReference type="Proteomes" id="UP000001566">
    <property type="component" value="Chromosome"/>
</dbReference>
<dbReference type="GO" id="GO:0031676">
    <property type="term" value="C:plasma membrane-derived thylakoid membrane"/>
    <property type="evidence" value="ECO:0007669"/>
    <property type="project" value="UniProtKB-SubCell"/>
</dbReference>
<dbReference type="GO" id="GO:0008137">
    <property type="term" value="F:NADH dehydrogenase (ubiquinone) activity"/>
    <property type="evidence" value="ECO:0007669"/>
    <property type="project" value="InterPro"/>
</dbReference>
<dbReference type="GO" id="GO:0048039">
    <property type="term" value="F:ubiquinone binding"/>
    <property type="evidence" value="ECO:0007669"/>
    <property type="project" value="TreeGrafter"/>
</dbReference>
<dbReference type="GO" id="GO:0042773">
    <property type="term" value="P:ATP synthesis coupled electron transport"/>
    <property type="evidence" value="ECO:0007669"/>
    <property type="project" value="InterPro"/>
</dbReference>
<dbReference type="GO" id="GO:0015990">
    <property type="term" value="P:electron transport coupled proton transport"/>
    <property type="evidence" value="ECO:0007669"/>
    <property type="project" value="TreeGrafter"/>
</dbReference>
<dbReference type="HAMAP" id="MF_00491">
    <property type="entry name" value="NDH1_NuoM"/>
    <property type="match status" value="1"/>
</dbReference>
<dbReference type="InterPro" id="IPR022997">
    <property type="entry name" value="NADH_Q_OxRdtase_chain4"/>
</dbReference>
<dbReference type="InterPro" id="IPR010227">
    <property type="entry name" value="NADH_Q_OxRdtase_chainM/4"/>
</dbReference>
<dbReference type="InterPro" id="IPR003918">
    <property type="entry name" value="NADH_UbQ_OxRdtase"/>
</dbReference>
<dbReference type="InterPro" id="IPR001750">
    <property type="entry name" value="ND/Mrp_TM"/>
</dbReference>
<dbReference type="NCBIfam" id="TIGR01972">
    <property type="entry name" value="NDH_I_M"/>
    <property type="match status" value="1"/>
</dbReference>
<dbReference type="NCBIfam" id="NF002713">
    <property type="entry name" value="PRK02546.1"/>
    <property type="match status" value="1"/>
</dbReference>
<dbReference type="NCBIfam" id="NF009212">
    <property type="entry name" value="PRK12561.1"/>
    <property type="match status" value="1"/>
</dbReference>
<dbReference type="PANTHER" id="PTHR43507:SF21">
    <property type="entry name" value="NAD(P)H-QUINONE OXIDOREDUCTASE CHAIN 4, CHLOROPLASTIC"/>
    <property type="match status" value="1"/>
</dbReference>
<dbReference type="PANTHER" id="PTHR43507">
    <property type="entry name" value="NADH-UBIQUINONE OXIDOREDUCTASE CHAIN 4"/>
    <property type="match status" value="1"/>
</dbReference>
<dbReference type="Pfam" id="PF00361">
    <property type="entry name" value="Proton_antipo_M"/>
    <property type="match status" value="1"/>
</dbReference>
<dbReference type="PRINTS" id="PR01437">
    <property type="entry name" value="NUOXDRDTASE4"/>
</dbReference>
<protein>
    <recommendedName>
        <fullName evidence="1">NAD(P)H-quinone oxidoreductase chain 4</fullName>
        <ecNumber evidence="1">7.1.1.-</ecNumber>
    </recommendedName>
    <alternativeName>
        <fullName evidence="1">NAD(P)H dehydrogenase I, chain 4</fullName>
    </alternativeName>
    <alternativeName>
        <fullName evidence="1">NDH-1, chain 4</fullName>
    </alternativeName>
</protein>
<accession>A5GP41</accession>
<reference key="1">
    <citation type="submission" date="2006-05" db="EMBL/GenBank/DDBJ databases">
        <authorList>
            <consortium name="Genoscope"/>
        </authorList>
    </citation>
    <scope>NUCLEOTIDE SEQUENCE [LARGE SCALE GENOMIC DNA]</scope>
    <source>
        <strain>WH7803</strain>
    </source>
</reference>
<sequence>MLEFAVSAPFDPAADISAGIIPAQFPWLSLSILFPIVGSLMVPFIPDQGDGRQVRWFALGIALTTFLITVAAYLNGYDPSFSGLQLSERVSWLPNLGLTWAVGADGLSMPLILLTSFITTLAVLAAWPVTFKPKLFFFLMLAMDGGQIAVFAVQDMLLFFLAWELELLPVYLLLAIWGGKKRQYAATKFILYTAGSSLFILLAALAMGFMGGGTPNFEYAVLAQKGFSTSFQLLCYAGLLIAFGVKLPIVPLHTWLPDAHGEATAPVHMLLAGILLKMGGYALMRFNAEMLPDAHAQFAPLLVVLGVVNIIYAALTSFAQRNLKRKIAYSSISHMGFVLIGIGSFSALGTSGAMLQMISHGLIGASLFFLVGATYDRTHTLQLDEMGGVGQKMRIMFALWTVCSLASLALPGMSGFVSELMVFTGFATDEAYTLTFRIVIDGLAAVGVILTPIYLLSMLREIFFGKENVQLASNTNLVDAEPREVYIIGCLLVPIIGIGLYPRLMTDSYRTAIEALVDRDVAAMETISRPTAPLIRNPSLAPALLQAPKLP</sequence>
<evidence type="ECO:0000255" key="1">
    <source>
        <dbReference type="HAMAP-Rule" id="MF_00491"/>
    </source>
</evidence>
<organism>
    <name type="scientific">Synechococcus sp. (strain WH7803)</name>
    <dbReference type="NCBI Taxonomy" id="32051"/>
    <lineage>
        <taxon>Bacteria</taxon>
        <taxon>Bacillati</taxon>
        <taxon>Cyanobacteriota</taxon>
        <taxon>Cyanophyceae</taxon>
        <taxon>Synechococcales</taxon>
        <taxon>Synechococcaceae</taxon>
        <taxon>Synechococcus</taxon>
    </lineage>
</organism>
<gene>
    <name evidence="1" type="primary">ndhD</name>
    <name type="ordered locus">SynWH7803_2280</name>
</gene>
<feature type="chain" id="PRO_0000343262" description="NAD(P)H-quinone oxidoreductase chain 4">
    <location>
        <begin position="1"/>
        <end position="551"/>
    </location>
</feature>
<feature type="transmembrane region" description="Helical" evidence="1">
    <location>
        <begin position="25"/>
        <end position="45"/>
    </location>
</feature>
<feature type="transmembrane region" description="Helical" evidence="1">
    <location>
        <begin position="56"/>
        <end position="76"/>
    </location>
</feature>
<feature type="transmembrane region" description="Helical" evidence="1">
    <location>
        <begin position="111"/>
        <end position="131"/>
    </location>
</feature>
<feature type="transmembrane region" description="Helical" evidence="1">
    <location>
        <begin position="133"/>
        <end position="153"/>
    </location>
</feature>
<feature type="transmembrane region" description="Helical" evidence="1">
    <location>
        <begin position="157"/>
        <end position="177"/>
    </location>
</feature>
<feature type="transmembrane region" description="Helical" evidence="1">
    <location>
        <begin position="189"/>
        <end position="209"/>
    </location>
</feature>
<feature type="transmembrane region" description="Helical" evidence="1">
    <location>
        <begin position="233"/>
        <end position="253"/>
    </location>
</feature>
<feature type="transmembrane region" description="Helical" evidence="1">
    <location>
        <begin position="264"/>
        <end position="284"/>
    </location>
</feature>
<feature type="transmembrane region" description="Helical" evidence="1">
    <location>
        <begin position="298"/>
        <end position="318"/>
    </location>
</feature>
<feature type="transmembrane region" description="Helical" evidence="1">
    <location>
        <begin position="335"/>
        <end position="355"/>
    </location>
</feature>
<feature type="transmembrane region" description="Helical" evidence="1">
    <location>
        <begin position="356"/>
        <end position="376"/>
    </location>
</feature>
<feature type="transmembrane region" description="Helical" evidence="1">
    <location>
        <begin position="397"/>
        <end position="417"/>
    </location>
</feature>
<feature type="transmembrane region" description="Helical" evidence="1">
    <location>
        <begin position="438"/>
        <end position="458"/>
    </location>
</feature>
<feature type="transmembrane region" description="Helical" evidence="1">
    <location>
        <begin position="485"/>
        <end position="505"/>
    </location>
</feature>
<comment type="function">
    <text evidence="1">NDH-1 shuttles electrons from NAD(P)H, via FMN and iron-sulfur (Fe-S) centers, to quinones in the respiratory chain. The immediate electron acceptor for the enzyme in this species is believed to be plastoquinone. Couples the redox reaction to proton translocation (for every two electrons transferred, four hydrogen ions are translocated across the cytoplasmic membrane), and thus conserves the redox energy in a proton gradient.</text>
</comment>
<comment type="catalytic activity">
    <reaction evidence="1">
        <text>a plastoquinone + NADH + (n+1) H(+)(in) = a plastoquinol + NAD(+) + n H(+)(out)</text>
        <dbReference type="Rhea" id="RHEA:42608"/>
        <dbReference type="Rhea" id="RHEA-COMP:9561"/>
        <dbReference type="Rhea" id="RHEA-COMP:9562"/>
        <dbReference type="ChEBI" id="CHEBI:15378"/>
        <dbReference type="ChEBI" id="CHEBI:17757"/>
        <dbReference type="ChEBI" id="CHEBI:57540"/>
        <dbReference type="ChEBI" id="CHEBI:57945"/>
        <dbReference type="ChEBI" id="CHEBI:62192"/>
    </reaction>
</comment>
<comment type="catalytic activity">
    <reaction evidence="1">
        <text>a plastoquinone + NADPH + (n+1) H(+)(in) = a plastoquinol + NADP(+) + n H(+)(out)</text>
        <dbReference type="Rhea" id="RHEA:42612"/>
        <dbReference type="Rhea" id="RHEA-COMP:9561"/>
        <dbReference type="Rhea" id="RHEA-COMP:9562"/>
        <dbReference type="ChEBI" id="CHEBI:15378"/>
        <dbReference type="ChEBI" id="CHEBI:17757"/>
        <dbReference type="ChEBI" id="CHEBI:57783"/>
        <dbReference type="ChEBI" id="CHEBI:58349"/>
        <dbReference type="ChEBI" id="CHEBI:62192"/>
    </reaction>
</comment>
<comment type="subcellular location">
    <subcellularLocation>
        <location evidence="1">Cellular thylakoid membrane</location>
        <topology evidence="1">Multi-pass membrane protein</topology>
    </subcellularLocation>
</comment>
<comment type="similarity">
    <text evidence="1">Belongs to the complex I subunit 4 family.</text>
</comment>
<proteinExistence type="inferred from homology"/>